<reference key="1">
    <citation type="submission" date="2005-08" db="EMBL/GenBank/DDBJ databases">
        <title>Complete sequence of Pelodictyon luteolum DSM 273.</title>
        <authorList>
            <consortium name="US DOE Joint Genome Institute"/>
            <person name="Copeland A."/>
            <person name="Lucas S."/>
            <person name="Lapidus A."/>
            <person name="Barry K."/>
            <person name="Detter J.C."/>
            <person name="Glavina T."/>
            <person name="Hammon N."/>
            <person name="Israni S."/>
            <person name="Pitluck S."/>
            <person name="Bryant D."/>
            <person name="Schmutz J."/>
            <person name="Larimer F."/>
            <person name="Land M."/>
            <person name="Kyrpides N."/>
            <person name="Ivanova N."/>
            <person name="Richardson P."/>
        </authorList>
    </citation>
    <scope>NUCLEOTIDE SEQUENCE [LARGE SCALE GENOMIC DNA]</scope>
    <source>
        <strain>DSM 273 / BCRC 81028 / 2530</strain>
    </source>
</reference>
<accession>Q3B1F5</accession>
<gene>
    <name evidence="1" type="primary">atpG</name>
    <name type="ordered locus">Plut_1984</name>
</gene>
<proteinExistence type="inferred from homology"/>
<dbReference type="EMBL" id="CP000096">
    <property type="protein sequence ID" value="ABB24826.1"/>
    <property type="molecule type" value="Genomic_DNA"/>
</dbReference>
<dbReference type="RefSeq" id="WP_011358696.1">
    <property type="nucleotide sequence ID" value="NC_007512.1"/>
</dbReference>
<dbReference type="SMR" id="Q3B1F5"/>
<dbReference type="STRING" id="319225.Plut_1984"/>
<dbReference type="KEGG" id="plt:Plut_1984"/>
<dbReference type="eggNOG" id="COG0224">
    <property type="taxonomic scope" value="Bacteria"/>
</dbReference>
<dbReference type="HOGENOM" id="CLU_050669_0_1_10"/>
<dbReference type="OrthoDB" id="9812769at2"/>
<dbReference type="Proteomes" id="UP000002709">
    <property type="component" value="Chromosome"/>
</dbReference>
<dbReference type="GO" id="GO:0005886">
    <property type="term" value="C:plasma membrane"/>
    <property type="evidence" value="ECO:0007669"/>
    <property type="project" value="UniProtKB-SubCell"/>
</dbReference>
<dbReference type="GO" id="GO:0045259">
    <property type="term" value="C:proton-transporting ATP synthase complex"/>
    <property type="evidence" value="ECO:0007669"/>
    <property type="project" value="UniProtKB-KW"/>
</dbReference>
<dbReference type="GO" id="GO:0005524">
    <property type="term" value="F:ATP binding"/>
    <property type="evidence" value="ECO:0007669"/>
    <property type="project" value="UniProtKB-UniRule"/>
</dbReference>
<dbReference type="GO" id="GO:0046933">
    <property type="term" value="F:proton-transporting ATP synthase activity, rotational mechanism"/>
    <property type="evidence" value="ECO:0007669"/>
    <property type="project" value="UniProtKB-UniRule"/>
</dbReference>
<dbReference type="GO" id="GO:0042777">
    <property type="term" value="P:proton motive force-driven plasma membrane ATP synthesis"/>
    <property type="evidence" value="ECO:0007669"/>
    <property type="project" value="UniProtKB-UniRule"/>
</dbReference>
<dbReference type="CDD" id="cd12151">
    <property type="entry name" value="F1-ATPase_gamma"/>
    <property type="match status" value="1"/>
</dbReference>
<dbReference type="Gene3D" id="3.40.1380.10">
    <property type="match status" value="1"/>
</dbReference>
<dbReference type="Gene3D" id="1.10.287.80">
    <property type="entry name" value="ATP synthase, gamma subunit, helix hairpin domain"/>
    <property type="match status" value="2"/>
</dbReference>
<dbReference type="HAMAP" id="MF_00815">
    <property type="entry name" value="ATP_synth_gamma_bact"/>
    <property type="match status" value="1"/>
</dbReference>
<dbReference type="InterPro" id="IPR035968">
    <property type="entry name" value="ATP_synth_F1_ATPase_gsu"/>
</dbReference>
<dbReference type="InterPro" id="IPR000131">
    <property type="entry name" value="ATP_synth_F1_gsu"/>
</dbReference>
<dbReference type="InterPro" id="IPR023632">
    <property type="entry name" value="ATP_synth_F1_gsu_CS"/>
</dbReference>
<dbReference type="NCBIfam" id="TIGR01146">
    <property type="entry name" value="ATPsyn_F1gamma"/>
    <property type="match status" value="1"/>
</dbReference>
<dbReference type="NCBIfam" id="NF009958">
    <property type="entry name" value="PRK13425.1"/>
    <property type="match status" value="1"/>
</dbReference>
<dbReference type="PANTHER" id="PTHR11693">
    <property type="entry name" value="ATP SYNTHASE GAMMA CHAIN"/>
    <property type="match status" value="1"/>
</dbReference>
<dbReference type="PANTHER" id="PTHR11693:SF22">
    <property type="entry name" value="ATP SYNTHASE SUBUNIT GAMMA, MITOCHONDRIAL"/>
    <property type="match status" value="1"/>
</dbReference>
<dbReference type="Pfam" id="PF00231">
    <property type="entry name" value="ATP-synt"/>
    <property type="match status" value="1"/>
</dbReference>
<dbReference type="PRINTS" id="PR00126">
    <property type="entry name" value="ATPASEGAMMA"/>
</dbReference>
<dbReference type="SUPFAM" id="SSF52943">
    <property type="entry name" value="ATP synthase (F1-ATPase), gamma subunit"/>
    <property type="match status" value="1"/>
</dbReference>
<dbReference type="PROSITE" id="PS00153">
    <property type="entry name" value="ATPASE_GAMMA"/>
    <property type="match status" value="1"/>
</dbReference>
<keyword id="KW-0066">ATP synthesis</keyword>
<keyword id="KW-0997">Cell inner membrane</keyword>
<keyword id="KW-1003">Cell membrane</keyword>
<keyword id="KW-0139">CF(1)</keyword>
<keyword id="KW-0375">Hydrogen ion transport</keyword>
<keyword id="KW-0406">Ion transport</keyword>
<keyword id="KW-0472">Membrane</keyword>
<keyword id="KW-1185">Reference proteome</keyword>
<keyword id="KW-0813">Transport</keyword>
<comment type="function">
    <text evidence="1">Produces ATP from ADP in the presence of a proton gradient across the membrane. The gamma chain is believed to be important in regulating ATPase activity and the flow of protons through the CF(0) complex.</text>
</comment>
<comment type="subunit">
    <text evidence="1">F-type ATPases have 2 components, CF(1) - the catalytic core - and CF(0) - the membrane proton channel. CF(1) has five subunits: alpha(3), beta(3), gamma(1), delta(1), epsilon(1). CF(0) has three main subunits: a, b and c.</text>
</comment>
<comment type="subcellular location">
    <subcellularLocation>
        <location evidence="1">Cell inner membrane</location>
        <topology evidence="1">Peripheral membrane protein</topology>
    </subcellularLocation>
</comment>
<comment type="similarity">
    <text evidence="1">Belongs to the ATPase gamma chain family.</text>
</comment>
<feature type="chain" id="PRO_1000053279" description="ATP synthase gamma chain">
    <location>
        <begin position="1"/>
        <end position="290"/>
    </location>
</feature>
<name>ATPG_CHLL3</name>
<evidence type="ECO:0000255" key="1">
    <source>
        <dbReference type="HAMAP-Rule" id="MF_00815"/>
    </source>
</evidence>
<sequence length="290" mass="31570">MPTLKDIRVRIKGVKSTQQVTKAMKMVAAAKLRKAQERAVMARPYAAKLKEMLGSLSGKVDTSASPLLADRADASRVLVVLITSDRGLCGAFNTNIIKLAHRTIHEEYAAAYAAGNVQLICAGTRGFDFFRKRGYSVLKGYPAVFQNLDFSTAREIAETASSMYVKGEVDRVVVVYNEFKSVLAPTLKAEVLLPIKSELPVAEGGDYIYEPSPAAIIEELVPKHLNTQVWGMMLESNAAEQAARMTAMDSATENAKELLRGLNISYNRARQAAITKELSEIVGGADALQN</sequence>
<protein>
    <recommendedName>
        <fullName evidence="1">ATP synthase gamma chain</fullName>
    </recommendedName>
    <alternativeName>
        <fullName evidence="1">ATP synthase F1 sector gamma subunit</fullName>
    </alternativeName>
    <alternativeName>
        <fullName evidence="1">F-ATPase gamma subunit</fullName>
    </alternativeName>
</protein>
<organism>
    <name type="scientific">Chlorobium luteolum (strain DSM 273 / BCRC 81028 / 2530)</name>
    <name type="common">Pelodictyon luteolum</name>
    <dbReference type="NCBI Taxonomy" id="319225"/>
    <lineage>
        <taxon>Bacteria</taxon>
        <taxon>Pseudomonadati</taxon>
        <taxon>Chlorobiota</taxon>
        <taxon>Chlorobiia</taxon>
        <taxon>Chlorobiales</taxon>
        <taxon>Chlorobiaceae</taxon>
        <taxon>Chlorobium/Pelodictyon group</taxon>
        <taxon>Pelodictyon</taxon>
    </lineage>
</organism>